<gene>
    <name type="primary">S10</name>
</gene>
<organism>
    <name type="scientific">Lymantria dispar cypovirus 1 (isolate Rao)</name>
    <name type="common">LdCPV-1</name>
    <dbReference type="NCBI Taxonomy" id="648169"/>
    <lineage>
        <taxon>Viruses</taxon>
        <taxon>Riboviria</taxon>
        <taxon>Orthornavirae</taxon>
        <taxon>Duplornaviricota</taxon>
        <taxon>Resentoviricetes</taxon>
        <taxon>Reovirales</taxon>
        <taxon>Spinareoviridae</taxon>
        <taxon>Cypovirus</taxon>
        <taxon>Cypovirus 1</taxon>
    </lineage>
</organism>
<proteinExistence type="inferred from homology"/>
<protein>
    <recommendedName>
        <fullName>Polyhedrin</fullName>
    </recommendedName>
</protein>
<reference key="1">
    <citation type="submission" date="2001-06" db="EMBL/GenBank/DDBJ databases">
        <title>Identification of dsRNA electrophoretypes of two cypoviruses from a dual infection in gypsy moth, Lymantria dispar.</title>
        <authorList>
            <person name="Rao S."/>
            <person name="Shapiro M."/>
            <person name="Lynn D."/>
            <person name="Hagiwara K."/>
            <person name="Blackmon B."/>
            <person name="Fang G."/>
            <person name="Carner G.R."/>
        </authorList>
    </citation>
    <scope>NUCLEOTIDE SEQUENCE [GENOMIC RNA]</scope>
</reference>
<name>PYHD_LDCPR</name>
<evidence type="ECO:0000250" key="1"/>
<evidence type="ECO:0000255" key="2"/>
<keyword id="KW-0325">Glycoprotein</keyword>
<keyword id="KW-0426">Late protein</keyword>
<keyword id="KW-1185">Reference proteome</keyword>
<keyword id="KW-0842">Viral occlusion body</keyword>
<feature type="chain" id="PRO_0000403212" description="Polyhedrin">
    <location>
        <begin position="1"/>
        <end position="248"/>
    </location>
</feature>
<feature type="glycosylation site" description="N-linked (GlcNAc...) asparagine; by host" evidence="2">
    <location>
        <position position="28"/>
    </location>
</feature>
<feature type="glycosylation site" description="N-linked (GlcNAc...) asparagine; by host" evidence="2">
    <location>
        <position position="77"/>
    </location>
</feature>
<feature type="glycosylation site" description="N-linked (GlcNAc...) asparagine; by host" evidence="2">
    <location>
        <position position="86"/>
    </location>
</feature>
<feature type="glycosylation site" description="N-linked (GlcNAc...) asparagine; by host" evidence="2">
    <location>
        <position position="237"/>
    </location>
</feature>
<sequence length="248" mass="28498">MADVAGTSNRDFRGREQRLFNSEQYNYNNSLNGEVSVWVYAYYSDGSVLVINKNSQYKVGISETFKALKEYREGQRNDSYDEYEVNQSIYYPNGGDAHKFHSNAKPRAIQIIFSPSVNVRTIKMAKDNSVSVPDDYLQRSHPWEATGIKYRKIKRDGEIVGYSHYFELPHEYNSISLAVSGVHKNPSSYNVGSAHNVMDVFQSCDLALRFCNRYWAELELVNHYISPNAYPYLDINNHSYGVALSNHQ</sequence>
<comment type="function">
    <text evidence="1">Major component of the virus occlusion bodies, which are large proteinaceous structures (polyhedra), that protect the virus from the outside environment for extended periods until they are ingested by insect larvae.</text>
</comment>
<comment type="subunit">
    <text evidence="1">Forms crystal-like bodies by self-assembly.</text>
</comment>
<accession>Q91ID2</accession>
<dbReference type="EMBL" id="AF389471">
    <property type="protein sequence ID" value="AAK73529.1"/>
    <property type="molecule type" value="Genomic_RNA"/>
</dbReference>
<dbReference type="SMR" id="Q91ID2"/>
<dbReference type="GlyCosmos" id="Q91ID2">
    <property type="glycosylation" value="4 sites, No reported glycans"/>
</dbReference>
<dbReference type="KEGG" id="vg:2598197"/>
<dbReference type="Proteomes" id="UP000006712">
    <property type="component" value="Genome"/>
</dbReference>
<dbReference type="GO" id="GO:0039679">
    <property type="term" value="C:viral occlusion body"/>
    <property type="evidence" value="ECO:0007669"/>
    <property type="project" value="UniProtKB-KW"/>
</dbReference>
<dbReference type="InterPro" id="IPR008464">
    <property type="entry name" value="Cypo_polyhedrin_Cypovirus1"/>
</dbReference>
<dbReference type="Pfam" id="PF05865">
    <property type="entry name" value="Cypo_polyhedrin"/>
    <property type="match status" value="1"/>
</dbReference>
<organismHost>
    <name type="scientific">Lymantria dispar</name>
    <name type="common">Gypsy moth</name>
    <name type="synonym">Porthetria dispar</name>
    <dbReference type="NCBI Taxonomy" id="13123"/>
</organismHost>